<protein>
    <recommendedName>
        <fullName>Porin</fullName>
    </recommendedName>
</protein>
<comment type="function">
    <text>Forms channels that allow the passive diffusion of small hydrophilic solutes up to an exclusion limit of about 0.6 kDa.</text>
</comment>
<comment type="subunit">
    <text>Homotrimer.</text>
</comment>
<comment type="subcellular location">
    <subcellularLocation>
        <location>Cell outer membrane</location>
        <topology>Multi-pass membrane protein</topology>
    </subcellularLocation>
</comment>
<organism>
    <name type="scientific">Fuscovulum blasticum</name>
    <name type="common">Rhodobacter blasticus</name>
    <name type="synonym">Rhodopseudomonas blastica</name>
    <dbReference type="NCBI Taxonomy" id="1075"/>
    <lineage>
        <taxon>Bacteria</taxon>
        <taxon>Pseudomonadati</taxon>
        <taxon>Pseudomonadota</taxon>
        <taxon>Alphaproteobacteria</taxon>
        <taxon>Rhodobacterales</taxon>
        <taxon>Paracoccaceae</taxon>
        <taxon>Pseudogemmobacter</taxon>
    </lineage>
</organism>
<reference key="1">
    <citation type="journal article" date="1994" name="Protein Sci.">
        <title>Structure of the membrane channel porin from Rhodopseudomonas blastica at 2.0-A resolution.</title>
        <authorList>
            <person name="Kreusch A."/>
            <person name="Neubueser A."/>
            <person name="Schiltz E."/>
            <person name="Weckesser J."/>
            <person name="Schulz G.E."/>
        </authorList>
    </citation>
    <scope>X-RAY CRYSTALLOGRAPHY (2.0 ANGSTROMS)</scope>
</reference>
<reference key="2">
    <citation type="journal article" date="1994" name="J. Mol. Biol.">
        <title>Refined structure of the porin from Rhodopseudomonas blastica. Comparison with the porin from Rhodobacter capsulatus.</title>
        <authorList>
            <person name="Kreusch A."/>
            <person name="Schulz G.E."/>
        </authorList>
    </citation>
    <scope>X-RAY CRYSTALLOGRAPHY (1.96 ANGSTROMS)</scope>
</reference>
<reference key="3">
    <citation type="journal article" date="1998" name="Protein Sci.">
        <title>Porin mutants with new channel properties.</title>
        <authorList>
            <person name="Schmid B."/>
            <person name="Maveyraud L."/>
            <person name="Kromer M."/>
            <person name="Schulz G.E."/>
        </authorList>
    </citation>
    <scope>X-RAY CRYSTALLOGRAPHY (2.0 ANGSTROMS) OF MUTANTS</scope>
</reference>
<accession>P39767</accession>
<dbReference type="PIR" id="S38806">
    <property type="entry name" value="S38806"/>
</dbReference>
<dbReference type="PDB" id="1BH3">
    <property type="method" value="X-ray"/>
    <property type="resolution" value="2.19 A"/>
    <property type="chains" value="A=2-289"/>
</dbReference>
<dbReference type="PDB" id="1H6S">
    <property type="method" value="X-ray"/>
    <property type="resolution" value="3.00 A"/>
    <property type="chains" value="1=1-289"/>
</dbReference>
<dbReference type="PDB" id="1PRN">
    <property type="method" value="X-ray"/>
    <property type="resolution" value="1.96 A"/>
    <property type="chains" value="A=1-289"/>
</dbReference>
<dbReference type="PDB" id="2PRN">
    <property type="method" value="X-ray"/>
    <property type="resolution" value="1.93 A"/>
    <property type="chains" value="A=2-289"/>
</dbReference>
<dbReference type="PDB" id="3PRN">
    <property type="method" value="X-ray"/>
    <property type="resolution" value="1.90 A"/>
    <property type="chains" value="A=2-289"/>
</dbReference>
<dbReference type="PDB" id="5PRN">
    <property type="method" value="X-ray"/>
    <property type="resolution" value="2.00 A"/>
    <property type="chains" value="A=2-289"/>
</dbReference>
<dbReference type="PDB" id="6PRN">
    <property type="method" value="X-ray"/>
    <property type="resolution" value="2.04 A"/>
    <property type="chains" value="A=2-289"/>
</dbReference>
<dbReference type="PDB" id="7PRN">
    <property type="method" value="X-ray"/>
    <property type="resolution" value="2.25 A"/>
    <property type="chains" value="A=2-289"/>
</dbReference>
<dbReference type="PDB" id="8PRN">
    <property type="method" value="X-ray"/>
    <property type="resolution" value="2.30 A"/>
    <property type="chains" value="A=2-289"/>
</dbReference>
<dbReference type="PDBsum" id="1BH3"/>
<dbReference type="PDBsum" id="1H6S"/>
<dbReference type="PDBsum" id="1PRN"/>
<dbReference type="PDBsum" id="2PRN"/>
<dbReference type="PDBsum" id="3PRN"/>
<dbReference type="PDBsum" id="5PRN"/>
<dbReference type="PDBsum" id="6PRN"/>
<dbReference type="PDBsum" id="7PRN"/>
<dbReference type="PDBsum" id="8PRN"/>
<dbReference type="SMR" id="P39767"/>
<dbReference type="DrugBank" id="DB04233">
    <property type="generic name" value="(Hydroxyethyloxy)Tri(Ethyloxy)Octane"/>
</dbReference>
<dbReference type="TCDB" id="1.B.7.1.3">
    <property type="family name" value="the rhodobacter porca porin (rpp) family"/>
</dbReference>
<dbReference type="EvolutionaryTrace" id="P39767"/>
<dbReference type="GO" id="GO:0009279">
    <property type="term" value="C:cell outer membrane"/>
    <property type="evidence" value="ECO:0007669"/>
    <property type="project" value="UniProtKB-SubCell"/>
</dbReference>
<dbReference type="GO" id="GO:0046930">
    <property type="term" value="C:pore complex"/>
    <property type="evidence" value="ECO:0007669"/>
    <property type="project" value="UniProtKB-KW"/>
</dbReference>
<dbReference type="GO" id="GO:0015288">
    <property type="term" value="F:porin activity"/>
    <property type="evidence" value="ECO:0007669"/>
    <property type="project" value="UniProtKB-KW"/>
</dbReference>
<dbReference type="GO" id="GO:0006811">
    <property type="term" value="P:monoatomic ion transport"/>
    <property type="evidence" value="ECO:0007669"/>
    <property type="project" value="UniProtKB-KW"/>
</dbReference>
<dbReference type="Gene3D" id="2.40.160.10">
    <property type="entry name" value="Porin"/>
    <property type="match status" value="1"/>
</dbReference>
<dbReference type="InterPro" id="IPR033900">
    <property type="entry name" value="Gram_neg_porin_domain"/>
</dbReference>
<dbReference type="InterPro" id="IPR023614">
    <property type="entry name" value="Porin_dom_sf"/>
</dbReference>
<dbReference type="Pfam" id="PF13609">
    <property type="entry name" value="Porin_4"/>
    <property type="match status" value="1"/>
</dbReference>
<dbReference type="SUPFAM" id="SSF56935">
    <property type="entry name" value="Porins"/>
    <property type="match status" value="1"/>
</dbReference>
<name>PORI_FUSBL</name>
<evidence type="ECO:0007829" key="1">
    <source>
        <dbReference type="PDB" id="3PRN"/>
    </source>
</evidence>
<gene>
    <name type="primary">opmA</name>
</gene>
<keyword id="KW-0002">3D-structure</keyword>
<keyword id="KW-0998">Cell outer membrane</keyword>
<keyword id="KW-0406">Ion transport</keyword>
<keyword id="KW-0472">Membrane</keyword>
<keyword id="KW-0626">Porin</keyword>
<keyword id="KW-0812">Transmembrane</keyword>
<keyword id="KW-1134">Transmembrane beta strand</keyword>
<keyword id="KW-0813">Transport</keyword>
<proteinExistence type="evidence at protein level"/>
<sequence>EISLNGYGRFGLQYVEDRGVGLEDTIISSRLRINIVGTTETDQGVTFGAKLRMQWDDGDAFAGTAGNAAQFWTSYNGVTVSVGNVDTAFDSVALTYDSEMGYEASSFGDAQSSFFAYNSKYDASGALDNYNGIAVTYSISGVNLYLSYVDPDQTVDSSLVTEEFGIAADWSNDMISLAAAYTTDAGGIVDNDIAFVGAAYKFNDAGTVGLNWYDNGLSTAGDQVTLYGNYAFGATTVRAYVSDIDRAGADTAYGIGADYQFAEGVKVSGSVQSGFANETVADVGVRFDF</sequence>
<feature type="chain" id="PRO_0000198029" description="Porin">
    <location>
        <begin position="1"/>
        <end position="289"/>
    </location>
</feature>
<feature type="strand" evidence="1">
    <location>
        <begin position="2"/>
        <end position="15"/>
    </location>
</feature>
<feature type="strand" evidence="1">
    <location>
        <begin position="24"/>
        <end position="39"/>
    </location>
</feature>
<feature type="strand" evidence="1">
    <location>
        <begin position="46"/>
        <end position="56"/>
    </location>
</feature>
<feature type="helix" evidence="1">
    <location>
        <begin position="60"/>
        <end position="62"/>
    </location>
</feature>
<feature type="strand" evidence="1">
    <location>
        <begin position="70"/>
        <end position="75"/>
    </location>
</feature>
<feature type="strand" evidence="1">
    <location>
        <begin position="78"/>
        <end position="84"/>
    </location>
</feature>
<feature type="helix" evidence="1">
    <location>
        <begin position="88"/>
        <end position="91"/>
    </location>
</feature>
<feature type="strand" evidence="1">
    <location>
        <begin position="92"/>
        <end position="94"/>
    </location>
</feature>
<feature type="turn" evidence="1">
    <location>
        <begin position="95"/>
        <end position="98"/>
    </location>
</feature>
<feature type="turn" evidence="1">
    <location>
        <begin position="101"/>
        <end position="104"/>
    </location>
</feature>
<feature type="turn" evidence="1">
    <location>
        <begin position="126"/>
        <end position="129"/>
    </location>
</feature>
<feature type="strand" evidence="1">
    <location>
        <begin position="131"/>
        <end position="138"/>
    </location>
</feature>
<feature type="strand" evidence="1">
    <location>
        <begin position="140"/>
        <end position="150"/>
    </location>
</feature>
<feature type="turn" evidence="1">
    <location>
        <begin position="151"/>
        <end position="154"/>
    </location>
</feature>
<feature type="helix" evidence="1">
    <location>
        <begin position="157"/>
        <end position="159"/>
    </location>
</feature>
<feature type="strand" evidence="1">
    <location>
        <begin position="163"/>
        <end position="171"/>
    </location>
</feature>
<feature type="strand" evidence="1">
    <location>
        <begin position="173"/>
        <end position="184"/>
    </location>
</feature>
<feature type="helix" evidence="1">
    <location>
        <begin position="185"/>
        <end position="187"/>
    </location>
</feature>
<feature type="strand" evidence="1">
    <location>
        <begin position="193"/>
        <end position="200"/>
    </location>
</feature>
<feature type="strand" evidence="1">
    <location>
        <begin position="203"/>
        <end position="214"/>
    </location>
</feature>
<feature type="strand" evidence="1">
    <location>
        <begin position="222"/>
        <end position="232"/>
    </location>
</feature>
<feature type="strand" evidence="1">
    <location>
        <begin position="235"/>
        <end position="244"/>
    </location>
</feature>
<feature type="strand" evidence="1">
    <location>
        <begin position="252"/>
        <end position="262"/>
    </location>
</feature>
<feature type="strand" evidence="1">
    <location>
        <begin position="265"/>
        <end position="273"/>
    </location>
</feature>
<feature type="strand" evidence="1">
    <location>
        <begin position="279"/>
        <end position="288"/>
    </location>
</feature>